<proteinExistence type="inferred from homology"/>
<comment type="function">
    <text evidence="1">Aspartyl-tRNA synthetase with relaxed tRNA specificity since it is able to aspartylate not only its cognate tRNA(Asp) but also tRNA(Asn). Reaction proceeds in two steps: L-aspartate is first activated by ATP to form Asp-AMP and then transferred to the acceptor end of tRNA(Asp/Asn).</text>
</comment>
<comment type="catalytic activity">
    <reaction evidence="1">
        <text>tRNA(Asx) + L-aspartate + ATP = L-aspartyl-tRNA(Asx) + AMP + diphosphate</text>
        <dbReference type="Rhea" id="RHEA:18349"/>
        <dbReference type="Rhea" id="RHEA-COMP:9710"/>
        <dbReference type="Rhea" id="RHEA-COMP:9711"/>
        <dbReference type="ChEBI" id="CHEBI:29991"/>
        <dbReference type="ChEBI" id="CHEBI:30616"/>
        <dbReference type="ChEBI" id="CHEBI:33019"/>
        <dbReference type="ChEBI" id="CHEBI:78442"/>
        <dbReference type="ChEBI" id="CHEBI:78516"/>
        <dbReference type="ChEBI" id="CHEBI:456215"/>
        <dbReference type="EC" id="6.1.1.23"/>
    </reaction>
</comment>
<comment type="subunit">
    <text evidence="1">Homodimer.</text>
</comment>
<comment type="subcellular location">
    <subcellularLocation>
        <location evidence="1">Cytoplasm</location>
    </subcellularLocation>
</comment>
<comment type="similarity">
    <text evidence="1">Belongs to the class-II aminoacyl-tRNA synthetase family. Type 1 subfamily.</text>
</comment>
<comment type="sequence caution" evidence="2">
    <conflict type="erroneous initiation">
        <sequence resource="EMBL-CDS" id="CAG44640"/>
    </conflict>
</comment>
<organism>
    <name type="scientific">Francisella tularensis subsp. tularensis (strain SCHU S4 / Schu 4)</name>
    <dbReference type="NCBI Taxonomy" id="177416"/>
    <lineage>
        <taxon>Bacteria</taxon>
        <taxon>Pseudomonadati</taxon>
        <taxon>Pseudomonadota</taxon>
        <taxon>Gammaproteobacteria</taxon>
        <taxon>Thiotrichales</taxon>
        <taxon>Francisellaceae</taxon>
        <taxon>Francisella</taxon>
    </lineage>
</organism>
<dbReference type="EC" id="6.1.1.23" evidence="1"/>
<dbReference type="EMBL" id="AJ749949">
    <property type="protein sequence ID" value="CAG44640.1"/>
    <property type="status" value="ALT_INIT"/>
    <property type="molecule type" value="Genomic_DNA"/>
</dbReference>
<dbReference type="RefSeq" id="WP_004578467.1">
    <property type="nucleotide sequence ID" value="NC_006570.2"/>
</dbReference>
<dbReference type="RefSeq" id="YP_169088.1">
    <property type="nucleotide sequence ID" value="NC_006570.2"/>
</dbReference>
<dbReference type="SMR" id="Q5NIQ4"/>
<dbReference type="STRING" id="177416.FTT_0007"/>
<dbReference type="DNASU" id="3192542"/>
<dbReference type="EnsemblBacteria" id="CAG44640">
    <property type="protein sequence ID" value="CAG44640"/>
    <property type="gene ID" value="FTT_0007"/>
</dbReference>
<dbReference type="KEGG" id="ftu:FTT_0007"/>
<dbReference type="PATRIC" id="fig|177416.18.peg.8"/>
<dbReference type="eggNOG" id="COG0173">
    <property type="taxonomic scope" value="Bacteria"/>
</dbReference>
<dbReference type="OrthoDB" id="9802326at2"/>
<dbReference type="Proteomes" id="UP000001174">
    <property type="component" value="Chromosome"/>
</dbReference>
<dbReference type="GO" id="GO:0005737">
    <property type="term" value="C:cytoplasm"/>
    <property type="evidence" value="ECO:0007669"/>
    <property type="project" value="UniProtKB-SubCell"/>
</dbReference>
<dbReference type="GO" id="GO:0004815">
    <property type="term" value="F:aspartate-tRNA ligase activity"/>
    <property type="evidence" value="ECO:0007669"/>
    <property type="project" value="UniProtKB-UniRule"/>
</dbReference>
<dbReference type="GO" id="GO:0050560">
    <property type="term" value="F:aspartate-tRNA(Asn) ligase activity"/>
    <property type="evidence" value="ECO:0007669"/>
    <property type="project" value="UniProtKB-EC"/>
</dbReference>
<dbReference type="GO" id="GO:0005524">
    <property type="term" value="F:ATP binding"/>
    <property type="evidence" value="ECO:0007669"/>
    <property type="project" value="UniProtKB-UniRule"/>
</dbReference>
<dbReference type="GO" id="GO:0003676">
    <property type="term" value="F:nucleic acid binding"/>
    <property type="evidence" value="ECO:0007669"/>
    <property type="project" value="InterPro"/>
</dbReference>
<dbReference type="GO" id="GO:0006422">
    <property type="term" value="P:aspartyl-tRNA aminoacylation"/>
    <property type="evidence" value="ECO:0007669"/>
    <property type="project" value="UniProtKB-UniRule"/>
</dbReference>
<dbReference type="CDD" id="cd00777">
    <property type="entry name" value="AspRS_core"/>
    <property type="match status" value="1"/>
</dbReference>
<dbReference type="CDD" id="cd04317">
    <property type="entry name" value="EcAspRS_like_N"/>
    <property type="match status" value="1"/>
</dbReference>
<dbReference type="Gene3D" id="3.30.930.10">
    <property type="entry name" value="Bira Bifunctional Protein, Domain 2"/>
    <property type="match status" value="1"/>
</dbReference>
<dbReference type="Gene3D" id="3.30.1360.30">
    <property type="entry name" value="GAD-like domain"/>
    <property type="match status" value="1"/>
</dbReference>
<dbReference type="Gene3D" id="2.40.50.140">
    <property type="entry name" value="Nucleic acid-binding proteins"/>
    <property type="match status" value="1"/>
</dbReference>
<dbReference type="HAMAP" id="MF_00044">
    <property type="entry name" value="Asp_tRNA_synth_type1"/>
    <property type="match status" value="1"/>
</dbReference>
<dbReference type="InterPro" id="IPR004364">
    <property type="entry name" value="Aa-tRNA-synt_II"/>
</dbReference>
<dbReference type="InterPro" id="IPR006195">
    <property type="entry name" value="aa-tRNA-synth_II"/>
</dbReference>
<dbReference type="InterPro" id="IPR045864">
    <property type="entry name" value="aa-tRNA-synth_II/BPL/LPL"/>
</dbReference>
<dbReference type="InterPro" id="IPR004524">
    <property type="entry name" value="Asp-tRNA-ligase_1"/>
</dbReference>
<dbReference type="InterPro" id="IPR047089">
    <property type="entry name" value="Asp-tRNA-ligase_1_N"/>
</dbReference>
<dbReference type="InterPro" id="IPR002312">
    <property type="entry name" value="Asp/Asn-tRNA-synth_IIb"/>
</dbReference>
<dbReference type="InterPro" id="IPR047090">
    <property type="entry name" value="AspRS_core"/>
</dbReference>
<dbReference type="InterPro" id="IPR004115">
    <property type="entry name" value="GAD-like_sf"/>
</dbReference>
<dbReference type="InterPro" id="IPR029351">
    <property type="entry name" value="GAD_dom"/>
</dbReference>
<dbReference type="InterPro" id="IPR012340">
    <property type="entry name" value="NA-bd_OB-fold"/>
</dbReference>
<dbReference type="InterPro" id="IPR004365">
    <property type="entry name" value="NA-bd_OB_tRNA"/>
</dbReference>
<dbReference type="NCBIfam" id="TIGR00459">
    <property type="entry name" value="aspS_bact"/>
    <property type="match status" value="1"/>
</dbReference>
<dbReference type="NCBIfam" id="NF001750">
    <property type="entry name" value="PRK00476.1"/>
    <property type="match status" value="1"/>
</dbReference>
<dbReference type="PANTHER" id="PTHR22594:SF5">
    <property type="entry name" value="ASPARTATE--TRNA LIGASE, MITOCHONDRIAL"/>
    <property type="match status" value="1"/>
</dbReference>
<dbReference type="PANTHER" id="PTHR22594">
    <property type="entry name" value="ASPARTYL/LYSYL-TRNA SYNTHETASE"/>
    <property type="match status" value="1"/>
</dbReference>
<dbReference type="Pfam" id="PF02938">
    <property type="entry name" value="GAD"/>
    <property type="match status" value="1"/>
</dbReference>
<dbReference type="Pfam" id="PF00152">
    <property type="entry name" value="tRNA-synt_2"/>
    <property type="match status" value="1"/>
</dbReference>
<dbReference type="Pfam" id="PF01336">
    <property type="entry name" value="tRNA_anti-codon"/>
    <property type="match status" value="1"/>
</dbReference>
<dbReference type="PRINTS" id="PR01042">
    <property type="entry name" value="TRNASYNTHASP"/>
</dbReference>
<dbReference type="SUPFAM" id="SSF55681">
    <property type="entry name" value="Class II aaRS and biotin synthetases"/>
    <property type="match status" value="1"/>
</dbReference>
<dbReference type="SUPFAM" id="SSF55261">
    <property type="entry name" value="GAD domain-like"/>
    <property type="match status" value="1"/>
</dbReference>
<dbReference type="SUPFAM" id="SSF50249">
    <property type="entry name" value="Nucleic acid-binding proteins"/>
    <property type="match status" value="1"/>
</dbReference>
<dbReference type="PROSITE" id="PS50862">
    <property type="entry name" value="AA_TRNA_LIGASE_II"/>
    <property type="match status" value="1"/>
</dbReference>
<feature type="chain" id="PRO_0000110873" description="Aspartate--tRNA(Asp/Asn) ligase">
    <location>
        <begin position="1"/>
        <end position="590"/>
    </location>
</feature>
<feature type="region of interest" description="Aspartate" evidence="1">
    <location>
        <begin position="196"/>
        <end position="199"/>
    </location>
</feature>
<feature type="binding site" evidence="1">
    <location>
        <position position="172"/>
    </location>
    <ligand>
        <name>L-aspartate</name>
        <dbReference type="ChEBI" id="CHEBI:29991"/>
    </ligand>
</feature>
<feature type="binding site" evidence="1">
    <location>
        <begin position="218"/>
        <end position="220"/>
    </location>
    <ligand>
        <name>ATP</name>
        <dbReference type="ChEBI" id="CHEBI:30616"/>
    </ligand>
</feature>
<feature type="binding site" evidence="1">
    <location>
        <position position="218"/>
    </location>
    <ligand>
        <name>L-aspartate</name>
        <dbReference type="ChEBI" id="CHEBI:29991"/>
    </ligand>
</feature>
<feature type="binding site" evidence="1">
    <location>
        <position position="227"/>
    </location>
    <ligand>
        <name>ATP</name>
        <dbReference type="ChEBI" id="CHEBI:30616"/>
    </ligand>
</feature>
<feature type="binding site" evidence="1">
    <location>
        <position position="449"/>
    </location>
    <ligand>
        <name>L-aspartate</name>
        <dbReference type="ChEBI" id="CHEBI:29991"/>
    </ligand>
</feature>
<feature type="binding site" evidence="1">
    <location>
        <position position="484"/>
    </location>
    <ligand>
        <name>ATP</name>
        <dbReference type="ChEBI" id="CHEBI:30616"/>
    </ligand>
</feature>
<feature type="binding site" evidence="1">
    <location>
        <position position="491"/>
    </location>
    <ligand>
        <name>L-aspartate</name>
        <dbReference type="ChEBI" id="CHEBI:29991"/>
    </ligand>
</feature>
<feature type="binding site" evidence="1">
    <location>
        <begin position="536"/>
        <end position="539"/>
    </location>
    <ligand>
        <name>ATP</name>
        <dbReference type="ChEBI" id="CHEBI:30616"/>
    </ligand>
</feature>
<feature type="site" description="Important for tRNA non-discrimination" evidence="1">
    <location>
        <position position="30"/>
    </location>
</feature>
<feature type="site" description="Important for tRNA non-discrimination" evidence="1">
    <location>
        <position position="80"/>
    </location>
</feature>
<keyword id="KW-0030">Aminoacyl-tRNA synthetase</keyword>
<keyword id="KW-0067">ATP-binding</keyword>
<keyword id="KW-0963">Cytoplasm</keyword>
<keyword id="KW-0436">Ligase</keyword>
<keyword id="KW-0547">Nucleotide-binding</keyword>
<keyword id="KW-0648">Protein biosynthesis</keyword>
<keyword id="KW-1185">Reference proteome</keyword>
<evidence type="ECO:0000255" key="1">
    <source>
        <dbReference type="HAMAP-Rule" id="MF_00044"/>
    </source>
</evidence>
<evidence type="ECO:0000305" key="2"/>
<name>SYDND_FRATT</name>
<sequence length="590" mass="66727">MRTHYSSDINEKLQGQKVTVCGWVHRRRDHGGVIFLDIRDRTGLVQLVFNPDNDNFKVADSLRSEFVIKAEGVVNLRPEGQENKNISSGKVEIIGDSIEVINKSKTIPFQLDDFQSTGEDVKLKYRYIDLRRPEMQHKLITRSKAIRYVRNFLDNNGFLDIETPFLTKATPEGARDYLVPSRNFNGKFYALPQSPQLFKQLLMVSGFDRYYQIVKCFRDEDLRADRQPEFTQIDIEASFIDEAFIMSTMERMIAGLFKETIGVEFATPFQVMTFADAIDKYGSDKPDLRIPLEFVNIKEDMQNEEFKVFSGPANDPQSRVIALRIPGGNDKLTRKMIDEYTKFVGIYGAKGLAYIKINSLSQGKEGLQSPIVKNISEETLFKVIDKTSAKEGDLLFFGAGKAKIVNDSMGALRAKIGEDLDLFNKDWAPLWVVDFPMFEKDDNRLYAMHHPFTAPKVSSVEDLVNTNPEELSSRAYDMVINGYEVGGGSIRIHKQDIQAKVFNLLGISDDEAREKFGFMLDALSYGTPIHGGIAFGIDRLIMLLTGTTNIRDVIAFPKTQTASCLMTEAPSTVSLEQLNELGIAVKKEER</sequence>
<gene>
    <name evidence="1" type="primary">aspS</name>
    <name type="ordered locus">FTT_0007</name>
</gene>
<protein>
    <recommendedName>
        <fullName evidence="1">Aspartate--tRNA(Asp/Asn) ligase</fullName>
        <ecNumber evidence="1">6.1.1.23</ecNumber>
    </recommendedName>
    <alternativeName>
        <fullName evidence="1">Aspartyl-tRNA synthetase</fullName>
        <shortName evidence="1">AspRS</shortName>
    </alternativeName>
    <alternativeName>
        <fullName evidence="1">Non-discriminating aspartyl-tRNA synthetase</fullName>
        <shortName evidence="1">ND-AspRS</shortName>
    </alternativeName>
</protein>
<accession>Q5NIQ4</accession>
<reference key="1">
    <citation type="journal article" date="2005" name="Nat. Genet.">
        <title>The complete genome sequence of Francisella tularensis, the causative agent of tularemia.</title>
        <authorList>
            <person name="Larsson P."/>
            <person name="Oyston P.C.F."/>
            <person name="Chain P."/>
            <person name="Chu M.C."/>
            <person name="Duffield M."/>
            <person name="Fuxelius H.-H."/>
            <person name="Garcia E."/>
            <person name="Haelltorp G."/>
            <person name="Johansson D."/>
            <person name="Isherwood K.E."/>
            <person name="Karp P.D."/>
            <person name="Larsson E."/>
            <person name="Liu Y."/>
            <person name="Michell S."/>
            <person name="Prior J."/>
            <person name="Prior R."/>
            <person name="Malfatti S."/>
            <person name="Sjoestedt A."/>
            <person name="Svensson K."/>
            <person name="Thompson N."/>
            <person name="Vergez L."/>
            <person name="Wagg J.K."/>
            <person name="Wren B.W."/>
            <person name="Lindler L.E."/>
            <person name="Andersson S.G.E."/>
            <person name="Forsman M."/>
            <person name="Titball R.W."/>
        </authorList>
    </citation>
    <scope>NUCLEOTIDE SEQUENCE [LARGE SCALE GENOMIC DNA]</scope>
    <source>
        <strain>SCHU S4 / Schu 4</strain>
    </source>
</reference>